<keyword id="KW-0165">Cleavage on pair of basic residues</keyword>
<keyword id="KW-1015">Disulfide bond</keyword>
<keyword id="KW-0325">Glycoprotein</keyword>
<keyword id="KW-0339">Growth factor</keyword>
<keyword id="KW-0964">Secreted</keyword>
<keyword id="KW-0732">Signal</keyword>
<proteinExistence type="inferred from homology"/>
<gene>
    <name type="primary">BDNF</name>
</gene>
<reference key="1">
    <citation type="journal article" date="2006" name="Mol. Phylogenet. Evol.">
        <title>Dispersal and vicariance: the complex evolutionary history of boid snakes.</title>
        <authorList>
            <person name="Noonan B.P."/>
            <person name="Chippindale P.T."/>
        </authorList>
    </citation>
    <scope>NUCLEOTIDE SEQUENCE [GENOMIC DNA]</scope>
</reference>
<comment type="function">
    <text evidence="1">Promotes the survival of neuronal populations that are all located either in the central nervous system or directly connected to it.</text>
</comment>
<comment type="subcellular location">
    <subcellularLocation>
        <location evidence="1">Secreted</location>
    </subcellularLocation>
</comment>
<comment type="similarity">
    <text evidence="3">Belongs to the NGF-beta family.</text>
</comment>
<name>BDNF_ERYCC</name>
<sequence length="223" mass="25015">SCMKAAPMKEVSIRGQGSLAYPGLRTQGNLETLGGPNDATRGLTSLADTFEHVIEELLDEQQAIQPSKENKDADLYSTRVMLSSQVPLEPPLLFLLEEYKNYLDAANMSMRVRRHSDPARRGELSVCDSTSEWVTAAEKKTAVDMSGATVTVLEKVPVPKGQLKQYFYETKCSSKGYAKEGCRGIDKRYWNSQCRTTQSFVRALTMDNKKRVGWRFIRIDTSC</sequence>
<evidence type="ECO:0000250" key="1"/>
<evidence type="ECO:0000255" key="2"/>
<evidence type="ECO:0000305" key="3"/>
<accession>Q1HN34</accession>
<protein>
    <recommendedName>
        <fullName evidence="3">Neurotrophic factor BDNF precursor form</fullName>
        <shortName>proBDNF</shortName>
    </recommendedName>
    <alternativeName>
        <fullName>Brain-derived neurotrophic factor</fullName>
    </alternativeName>
    <component>
        <recommendedName>
            <fullName>Neurotrophic factor BDNF</fullName>
        </recommendedName>
    </component>
</protein>
<organism>
    <name type="scientific">Eryx colubrinus colubrinus</name>
    <dbReference type="NCBI Taxonomy" id="51865"/>
    <lineage>
        <taxon>Eukaryota</taxon>
        <taxon>Metazoa</taxon>
        <taxon>Chordata</taxon>
        <taxon>Craniata</taxon>
        <taxon>Vertebrata</taxon>
        <taxon>Euteleostomi</taxon>
        <taxon>Lepidosauria</taxon>
        <taxon>Squamata</taxon>
        <taxon>Bifurcata</taxon>
        <taxon>Unidentata</taxon>
        <taxon>Episquamata</taxon>
        <taxon>Toxicofera</taxon>
        <taxon>Serpentes</taxon>
        <taxon>Henophidia</taxon>
        <taxon>Boidae</taxon>
        <taxon>Erycinae</taxon>
        <taxon>Eryx</taxon>
    </lineage>
</organism>
<feature type="signal peptide" evidence="2">
    <location>
        <begin position="1" status="less than"/>
        <end position="5"/>
    </location>
</feature>
<feature type="propeptide" id="PRO_0000346679" evidence="1">
    <location>
        <begin position="6"/>
        <end position="114"/>
    </location>
</feature>
<feature type="chain" id="PRO_0000346680" description="Neurotrophic factor BDNF">
    <location>
        <begin position="115"/>
        <end position="223" status="greater than"/>
    </location>
</feature>
<feature type="glycosylation site" description="N-linked (GlcNAc...) asparagine" evidence="2">
    <location>
        <position position="107"/>
    </location>
</feature>
<feature type="disulfide bond" evidence="1">
    <location>
        <begin position="127"/>
        <end position="194"/>
    </location>
</feature>
<feature type="disulfide bond" evidence="1">
    <location>
        <begin position="172"/>
        <end position="223"/>
    </location>
</feature>
<feature type="non-terminal residue">
    <location>
        <position position="1"/>
    </location>
</feature>
<feature type="non-terminal residue">
    <location>
        <position position="223"/>
    </location>
</feature>
<dbReference type="EMBL" id="DQ465570">
    <property type="protein sequence ID" value="ABF56547.1"/>
    <property type="molecule type" value="Genomic_DNA"/>
</dbReference>
<dbReference type="SMR" id="Q1HN34"/>
<dbReference type="GlyCosmos" id="Q1HN34">
    <property type="glycosylation" value="1 site, No reported glycans"/>
</dbReference>
<dbReference type="GO" id="GO:0030424">
    <property type="term" value="C:axon"/>
    <property type="evidence" value="ECO:0007669"/>
    <property type="project" value="TreeGrafter"/>
</dbReference>
<dbReference type="GO" id="GO:0030425">
    <property type="term" value="C:dendrite"/>
    <property type="evidence" value="ECO:0007669"/>
    <property type="project" value="TreeGrafter"/>
</dbReference>
<dbReference type="GO" id="GO:0005615">
    <property type="term" value="C:extracellular space"/>
    <property type="evidence" value="ECO:0007669"/>
    <property type="project" value="TreeGrafter"/>
</dbReference>
<dbReference type="GO" id="GO:0008021">
    <property type="term" value="C:synaptic vesicle"/>
    <property type="evidence" value="ECO:0007669"/>
    <property type="project" value="TreeGrafter"/>
</dbReference>
<dbReference type="GO" id="GO:0008083">
    <property type="term" value="F:growth factor activity"/>
    <property type="evidence" value="ECO:0007669"/>
    <property type="project" value="UniProtKB-KW"/>
</dbReference>
<dbReference type="GO" id="GO:0005163">
    <property type="term" value="F:nerve growth factor receptor binding"/>
    <property type="evidence" value="ECO:0007669"/>
    <property type="project" value="TreeGrafter"/>
</dbReference>
<dbReference type="GO" id="GO:0007169">
    <property type="term" value="P:cell surface receptor protein tyrosine kinase signaling pathway"/>
    <property type="evidence" value="ECO:0007669"/>
    <property type="project" value="TreeGrafter"/>
</dbReference>
<dbReference type="GO" id="GO:0050804">
    <property type="term" value="P:modulation of chemical synaptic transmission"/>
    <property type="evidence" value="ECO:0007669"/>
    <property type="project" value="TreeGrafter"/>
</dbReference>
<dbReference type="GO" id="GO:0043524">
    <property type="term" value="P:negative regulation of neuron apoptotic process"/>
    <property type="evidence" value="ECO:0007669"/>
    <property type="project" value="TreeGrafter"/>
</dbReference>
<dbReference type="GO" id="GO:0021675">
    <property type="term" value="P:nerve development"/>
    <property type="evidence" value="ECO:0007669"/>
    <property type="project" value="TreeGrafter"/>
</dbReference>
<dbReference type="GO" id="GO:0038180">
    <property type="term" value="P:nerve growth factor signaling pathway"/>
    <property type="evidence" value="ECO:0007669"/>
    <property type="project" value="TreeGrafter"/>
</dbReference>
<dbReference type="GO" id="GO:0048812">
    <property type="term" value="P:neuron projection morphogenesis"/>
    <property type="evidence" value="ECO:0007669"/>
    <property type="project" value="TreeGrafter"/>
</dbReference>
<dbReference type="FunFam" id="2.10.90.10:FF:000002">
    <property type="entry name" value="Brain-derived neurotrophic factor"/>
    <property type="match status" value="1"/>
</dbReference>
<dbReference type="Gene3D" id="2.10.90.10">
    <property type="entry name" value="Cystine-knot cytokines"/>
    <property type="match status" value="1"/>
</dbReference>
<dbReference type="InterPro" id="IPR020430">
    <property type="entry name" value="Brain-der_neurotrophic_factor"/>
</dbReference>
<dbReference type="InterPro" id="IPR029034">
    <property type="entry name" value="Cystine-knot_cytokine"/>
</dbReference>
<dbReference type="InterPro" id="IPR020408">
    <property type="entry name" value="Nerve_growth_factor-like"/>
</dbReference>
<dbReference type="InterPro" id="IPR002072">
    <property type="entry name" value="Nerve_growth_factor-rel"/>
</dbReference>
<dbReference type="InterPro" id="IPR019846">
    <property type="entry name" value="Nerve_growth_factor_CS"/>
</dbReference>
<dbReference type="PANTHER" id="PTHR11589:SF3">
    <property type="entry name" value="BRAIN-DERIVED NEUROTROPHIC FACTOR"/>
    <property type="match status" value="1"/>
</dbReference>
<dbReference type="PANTHER" id="PTHR11589">
    <property type="entry name" value="NERVE GROWTH FACTOR NGF -RELATED"/>
    <property type="match status" value="1"/>
</dbReference>
<dbReference type="Pfam" id="PF00243">
    <property type="entry name" value="NGF"/>
    <property type="match status" value="1"/>
</dbReference>
<dbReference type="PIRSF" id="PIRSF001789">
    <property type="entry name" value="NGF"/>
    <property type="match status" value="1"/>
</dbReference>
<dbReference type="PRINTS" id="PR01912">
    <property type="entry name" value="BDNFACTOR"/>
</dbReference>
<dbReference type="PRINTS" id="PR00268">
    <property type="entry name" value="NGF"/>
</dbReference>
<dbReference type="SMART" id="SM00140">
    <property type="entry name" value="NGF"/>
    <property type="match status" value="1"/>
</dbReference>
<dbReference type="SUPFAM" id="SSF57501">
    <property type="entry name" value="Cystine-knot cytokines"/>
    <property type="match status" value="1"/>
</dbReference>
<dbReference type="PROSITE" id="PS00248">
    <property type="entry name" value="NGF_1"/>
    <property type="match status" value="1"/>
</dbReference>
<dbReference type="PROSITE" id="PS50270">
    <property type="entry name" value="NGF_2"/>
    <property type="match status" value="1"/>
</dbReference>